<proteinExistence type="inferred from homology"/>
<name>SYH_PSEPW</name>
<keyword id="KW-0030">Aminoacyl-tRNA synthetase</keyword>
<keyword id="KW-0067">ATP-binding</keyword>
<keyword id="KW-0963">Cytoplasm</keyword>
<keyword id="KW-0436">Ligase</keyword>
<keyword id="KW-0547">Nucleotide-binding</keyword>
<keyword id="KW-0648">Protein biosynthesis</keyword>
<sequence>MSKSLQAIRGMNDILPEQSPLWRYFEGTVAGLLDTYGYSQIRTPIVEFTELFKRSIGEVTDIVEKEMYTFEDRNGDSLTLRPEGTAACVRAVLEHGITGNGQVQKLWYIGQMFRHERPQKGRYRQFHQIGVEVFNLDGPDIDAELIMLTWRLWGLLGIQDAVKLELNSLGTSEARARYRDALVEFLSARLEQLDEDSQRRLKSNPLRILDSKDPNTQAVLVGAPKLEDYLDEDSRVHFEGLKARLDAAGIPFVINTKLVRGLDYYSKTVFEWVTDKLGAQGTVCAGGRYDGLVEQMGGKPTTGVGFAMGIERLILLLETLGKVPASINRQIDVYLCAFGEQAELAGLRLSESLRDRLPGLRLAVNAGGGSFKSQFKKADKSGALFALILGDDELAKQEIGLKPLRGQGEQQNIAWDALAEHLETAIAQA</sequence>
<gene>
    <name evidence="1" type="primary">hisS</name>
    <name type="ordered locus">PputW619_4324</name>
</gene>
<accession>B1JDV7</accession>
<organism>
    <name type="scientific">Pseudomonas putida (strain W619)</name>
    <dbReference type="NCBI Taxonomy" id="390235"/>
    <lineage>
        <taxon>Bacteria</taxon>
        <taxon>Pseudomonadati</taxon>
        <taxon>Pseudomonadota</taxon>
        <taxon>Gammaproteobacteria</taxon>
        <taxon>Pseudomonadales</taxon>
        <taxon>Pseudomonadaceae</taxon>
        <taxon>Pseudomonas</taxon>
    </lineage>
</organism>
<evidence type="ECO:0000255" key="1">
    <source>
        <dbReference type="HAMAP-Rule" id="MF_00127"/>
    </source>
</evidence>
<dbReference type="EC" id="6.1.1.21" evidence="1"/>
<dbReference type="EMBL" id="CP000949">
    <property type="protein sequence ID" value="ACA74804.1"/>
    <property type="molecule type" value="Genomic_DNA"/>
</dbReference>
<dbReference type="SMR" id="B1JDV7"/>
<dbReference type="STRING" id="390235.PputW619_4324"/>
<dbReference type="KEGG" id="ppw:PputW619_4324"/>
<dbReference type="eggNOG" id="COG0124">
    <property type="taxonomic scope" value="Bacteria"/>
</dbReference>
<dbReference type="HOGENOM" id="CLU_025113_1_1_6"/>
<dbReference type="OrthoDB" id="9800814at2"/>
<dbReference type="GO" id="GO:0005737">
    <property type="term" value="C:cytoplasm"/>
    <property type="evidence" value="ECO:0007669"/>
    <property type="project" value="UniProtKB-SubCell"/>
</dbReference>
<dbReference type="GO" id="GO:0005524">
    <property type="term" value="F:ATP binding"/>
    <property type="evidence" value="ECO:0007669"/>
    <property type="project" value="UniProtKB-UniRule"/>
</dbReference>
<dbReference type="GO" id="GO:0004821">
    <property type="term" value="F:histidine-tRNA ligase activity"/>
    <property type="evidence" value="ECO:0007669"/>
    <property type="project" value="UniProtKB-UniRule"/>
</dbReference>
<dbReference type="GO" id="GO:0006427">
    <property type="term" value="P:histidyl-tRNA aminoacylation"/>
    <property type="evidence" value="ECO:0007669"/>
    <property type="project" value="UniProtKB-UniRule"/>
</dbReference>
<dbReference type="CDD" id="cd00773">
    <property type="entry name" value="HisRS-like_core"/>
    <property type="match status" value="1"/>
</dbReference>
<dbReference type="CDD" id="cd00859">
    <property type="entry name" value="HisRS_anticodon"/>
    <property type="match status" value="1"/>
</dbReference>
<dbReference type="FunFam" id="3.30.930.10:FF:000005">
    <property type="entry name" value="Histidine--tRNA ligase"/>
    <property type="match status" value="1"/>
</dbReference>
<dbReference type="Gene3D" id="3.40.50.800">
    <property type="entry name" value="Anticodon-binding domain"/>
    <property type="match status" value="1"/>
</dbReference>
<dbReference type="Gene3D" id="3.30.930.10">
    <property type="entry name" value="Bira Bifunctional Protein, Domain 2"/>
    <property type="match status" value="1"/>
</dbReference>
<dbReference type="HAMAP" id="MF_00127">
    <property type="entry name" value="His_tRNA_synth"/>
    <property type="match status" value="1"/>
</dbReference>
<dbReference type="InterPro" id="IPR006195">
    <property type="entry name" value="aa-tRNA-synth_II"/>
</dbReference>
<dbReference type="InterPro" id="IPR045864">
    <property type="entry name" value="aa-tRNA-synth_II/BPL/LPL"/>
</dbReference>
<dbReference type="InterPro" id="IPR004154">
    <property type="entry name" value="Anticodon-bd"/>
</dbReference>
<dbReference type="InterPro" id="IPR036621">
    <property type="entry name" value="Anticodon-bd_dom_sf"/>
</dbReference>
<dbReference type="InterPro" id="IPR015807">
    <property type="entry name" value="His-tRNA-ligase"/>
</dbReference>
<dbReference type="InterPro" id="IPR041715">
    <property type="entry name" value="HisRS-like_core"/>
</dbReference>
<dbReference type="InterPro" id="IPR004516">
    <property type="entry name" value="HisRS/HisZ"/>
</dbReference>
<dbReference type="InterPro" id="IPR033656">
    <property type="entry name" value="HisRS_anticodon"/>
</dbReference>
<dbReference type="NCBIfam" id="TIGR00442">
    <property type="entry name" value="hisS"/>
    <property type="match status" value="1"/>
</dbReference>
<dbReference type="PANTHER" id="PTHR43707:SF1">
    <property type="entry name" value="HISTIDINE--TRNA LIGASE, MITOCHONDRIAL-RELATED"/>
    <property type="match status" value="1"/>
</dbReference>
<dbReference type="PANTHER" id="PTHR43707">
    <property type="entry name" value="HISTIDYL-TRNA SYNTHETASE"/>
    <property type="match status" value="1"/>
</dbReference>
<dbReference type="Pfam" id="PF03129">
    <property type="entry name" value="HGTP_anticodon"/>
    <property type="match status" value="1"/>
</dbReference>
<dbReference type="Pfam" id="PF13393">
    <property type="entry name" value="tRNA-synt_His"/>
    <property type="match status" value="1"/>
</dbReference>
<dbReference type="PIRSF" id="PIRSF001549">
    <property type="entry name" value="His-tRNA_synth"/>
    <property type="match status" value="1"/>
</dbReference>
<dbReference type="SUPFAM" id="SSF52954">
    <property type="entry name" value="Class II aaRS ABD-related"/>
    <property type="match status" value="1"/>
</dbReference>
<dbReference type="SUPFAM" id="SSF55681">
    <property type="entry name" value="Class II aaRS and biotin synthetases"/>
    <property type="match status" value="1"/>
</dbReference>
<dbReference type="PROSITE" id="PS50862">
    <property type="entry name" value="AA_TRNA_LIGASE_II"/>
    <property type="match status" value="1"/>
</dbReference>
<reference key="1">
    <citation type="submission" date="2008-02" db="EMBL/GenBank/DDBJ databases">
        <title>Complete sequence of Pseudomonas putida W619.</title>
        <authorList>
            <person name="Copeland A."/>
            <person name="Lucas S."/>
            <person name="Lapidus A."/>
            <person name="Barry K."/>
            <person name="Detter J.C."/>
            <person name="Glavina del Rio T."/>
            <person name="Dalin E."/>
            <person name="Tice H."/>
            <person name="Pitluck S."/>
            <person name="Chain P."/>
            <person name="Malfatti S."/>
            <person name="Shin M."/>
            <person name="Vergez L."/>
            <person name="Schmutz J."/>
            <person name="Larimer F."/>
            <person name="Land M."/>
            <person name="Hauser L."/>
            <person name="Kyrpides N."/>
            <person name="Kim E."/>
            <person name="Taghavi S."/>
            <person name="Vangronsveld D."/>
            <person name="van der Lelie D."/>
            <person name="Richardson P."/>
        </authorList>
    </citation>
    <scope>NUCLEOTIDE SEQUENCE [LARGE SCALE GENOMIC DNA]</scope>
    <source>
        <strain>W619</strain>
    </source>
</reference>
<comment type="catalytic activity">
    <reaction evidence="1">
        <text>tRNA(His) + L-histidine + ATP = L-histidyl-tRNA(His) + AMP + diphosphate + H(+)</text>
        <dbReference type="Rhea" id="RHEA:17313"/>
        <dbReference type="Rhea" id="RHEA-COMP:9665"/>
        <dbReference type="Rhea" id="RHEA-COMP:9689"/>
        <dbReference type="ChEBI" id="CHEBI:15378"/>
        <dbReference type="ChEBI" id="CHEBI:30616"/>
        <dbReference type="ChEBI" id="CHEBI:33019"/>
        <dbReference type="ChEBI" id="CHEBI:57595"/>
        <dbReference type="ChEBI" id="CHEBI:78442"/>
        <dbReference type="ChEBI" id="CHEBI:78527"/>
        <dbReference type="ChEBI" id="CHEBI:456215"/>
        <dbReference type="EC" id="6.1.1.21"/>
    </reaction>
</comment>
<comment type="subunit">
    <text evidence="1">Homodimer.</text>
</comment>
<comment type="subcellular location">
    <subcellularLocation>
        <location evidence="1">Cytoplasm</location>
    </subcellularLocation>
</comment>
<comment type="similarity">
    <text evidence="1">Belongs to the class-II aminoacyl-tRNA synthetase family.</text>
</comment>
<protein>
    <recommendedName>
        <fullName evidence="1">Histidine--tRNA ligase</fullName>
        <ecNumber evidence="1">6.1.1.21</ecNumber>
    </recommendedName>
    <alternativeName>
        <fullName evidence="1">Histidyl-tRNA synthetase</fullName>
        <shortName evidence="1">HisRS</shortName>
    </alternativeName>
</protein>
<feature type="chain" id="PRO_1000095581" description="Histidine--tRNA ligase">
    <location>
        <begin position="1"/>
        <end position="429"/>
    </location>
</feature>